<dbReference type="EMBL" id="CP000747">
    <property type="protein sequence ID" value="ACG77001.1"/>
    <property type="molecule type" value="Genomic_DNA"/>
</dbReference>
<dbReference type="RefSeq" id="WP_012521149.1">
    <property type="nucleotide sequence ID" value="NC_011144.1"/>
</dbReference>
<dbReference type="SMR" id="B4RF13"/>
<dbReference type="STRING" id="450851.PHZ_c0587"/>
<dbReference type="KEGG" id="pzu:PHZ_c0587"/>
<dbReference type="eggNOG" id="COG0711">
    <property type="taxonomic scope" value="Bacteria"/>
</dbReference>
<dbReference type="HOGENOM" id="CLU_079215_6_1_5"/>
<dbReference type="Proteomes" id="UP000001868">
    <property type="component" value="Chromosome"/>
</dbReference>
<dbReference type="GO" id="GO:0005886">
    <property type="term" value="C:plasma membrane"/>
    <property type="evidence" value="ECO:0007669"/>
    <property type="project" value="UniProtKB-SubCell"/>
</dbReference>
<dbReference type="GO" id="GO:0045259">
    <property type="term" value="C:proton-transporting ATP synthase complex"/>
    <property type="evidence" value="ECO:0007669"/>
    <property type="project" value="UniProtKB-KW"/>
</dbReference>
<dbReference type="GO" id="GO:0046933">
    <property type="term" value="F:proton-transporting ATP synthase activity, rotational mechanism"/>
    <property type="evidence" value="ECO:0007669"/>
    <property type="project" value="UniProtKB-UniRule"/>
</dbReference>
<dbReference type="HAMAP" id="MF_01398">
    <property type="entry name" value="ATP_synth_b_bprime"/>
    <property type="match status" value="1"/>
</dbReference>
<dbReference type="InterPro" id="IPR002146">
    <property type="entry name" value="ATP_synth_b/b'su_bac/chlpt"/>
</dbReference>
<dbReference type="NCBIfam" id="NF011045">
    <property type="entry name" value="PRK14475.1"/>
    <property type="match status" value="1"/>
</dbReference>
<dbReference type="Pfam" id="PF00430">
    <property type="entry name" value="ATP-synt_B"/>
    <property type="match status" value="1"/>
</dbReference>
<keyword id="KW-0066">ATP synthesis</keyword>
<keyword id="KW-0997">Cell inner membrane</keyword>
<keyword id="KW-1003">Cell membrane</keyword>
<keyword id="KW-0138">CF(0)</keyword>
<keyword id="KW-0375">Hydrogen ion transport</keyword>
<keyword id="KW-0406">Ion transport</keyword>
<keyword id="KW-0472">Membrane</keyword>
<keyword id="KW-1185">Reference proteome</keyword>
<keyword id="KW-0812">Transmembrane</keyword>
<keyword id="KW-1133">Transmembrane helix</keyword>
<keyword id="KW-0813">Transport</keyword>
<name>ATPF_PHEZH</name>
<sequence length="167" mass="17905">MPAFLNPAEAEFWVGAGLLIFLGIVFFGAKAHKAIAAALDAKAASIQANLDEAARIRDEARRLLEGLQAERAEAERQAKEMLATAEVQVRQFEAEAKAKLEEAIERRRRMAEQKIATAEAQAAAEVKAAAAELAAQMAESVLAQRLTGAKADPLVDRAIGQLASKLQ</sequence>
<organism>
    <name type="scientific">Phenylobacterium zucineum (strain HLK1)</name>
    <dbReference type="NCBI Taxonomy" id="450851"/>
    <lineage>
        <taxon>Bacteria</taxon>
        <taxon>Pseudomonadati</taxon>
        <taxon>Pseudomonadota</taxon>
        <taxon>Alphaproteobacteria</taxon>
        <taxon>Caulobacterales</taxon>
        <taxon>Caulobacteraceae</taxon>
        <taxon>Phenylobacterium</taxon>
    </lineage>
</organism>
<protein>
    <recommendedName>
        <fullName evidence="1">ATP synthase subunit b</fullName>
    </recommendedName>
    <alternativeName>
        <fullName evidence="1">ATP synthase F(0) sector subunit b</fullName>
    </alternativeName>
    <alternativeName>
        <fullName evidence="1">ATPase subunit I</fullName>
    </alternativeName>
    <alternativeName>
        <fullName evidence="1">F-type ATPase subunit b</fullName>
        <shortName evidence="1">F-ATPase subunit b</shortName>
    </alternativeName>
</protein>
<comment type="function">
    <text evidence="1">F(1)F(0) ATP synthase produces ATP from ADP in the presence of a proton or sodium gradient. F-type ATPases consist of two structural domains, F(1) containing the extramembraneous catalytic core and F(0) containing the membrane proton channel, linked together by a central stalk and a peripheral stalk. During catalysis, ATP synthesis in the catalytic domain of F(1) is coupled via a rotary mechanism of the central stalk subunits to proton translocation.</text>
</comment>
<comment type="function">
    <text evidence="1">Component of the F(0) channel, it forms part of the peripheral stalk, linking F(1) to F(0).</text>
</comment>
<comment type="subunit">
    <text evidence="1">F-type ATPases have 2 components, F(1) - the catalytic core - and F(0) - the membrane proton channel. F(1) has five subunits: alpha(3), beta(3), gamma(1), delta(1), epsilon(1). F(0) has three main subunits: a(1), b(2) and c(10-14). The alpha and beta chains form an alternating ring which encloses part of the gamma chain. F(1) is attached to F(0) by a central stalk formed by the gamma and epsilon chains, while a peripheral stalk is formed by the delta and b chains.</text>
</comment>
<comment type="subcellular location">
    <subcellularLocation>
        <location evidence="1">Cell inner membrane</location>
        <topology evidence="1">Single-pass membrane protein</topology>
    </subcellularLocation>
</comment>
<comment type="similarity">
    <text evidence="1">Belongs to the ATPase B chain family.</text>
</comment>
<accession>B4RF13</accession>
<evidence type="ECO:0000255" key="1">
    <source>
        <dbReference type="HAMAP-Rule" id="MF_01398"/>
    </source>
</evidence>
<feature type="chain" id="PRO_0000368655" description="ATP synthase subunit b">
    <location>
        <begin position="1"/>
        <end position="167"/>
    </location>
</feature>
<feature type="transmembrane region" description="Helical" evidence="1">
    <location>
        <begin position="8"/>
        <end position="28"/>
    </location>
</feature>
<reference key="1">
    <citation type="journal article" date="2008" name="BMC Genomics">
        <title>Complete genome of Phenylobacterium zucineum - a novel facultative intracellular bacterium isolated from human erythroleukemia cell line K562.</title>
        <authorList>
            <person name="Luo Y."/>
            <person name="Xu X."/>
            <person name="Ding Z."/>
            <person name="Liu Z."/>
            <person name="Zhang B."/>
            <person name="Yan Z."/>
            <person name="Sun J."/>
            <person name="Hu S."/>
            <person name="Hu X."/>
        </authorList>
    </citation>
    <scope>NUCLEOTIDE SEQUENCE [LARGE SCALE GENOMIC DNA]</scope>
    <source>
        <strain>HLK1</strain>
    </source>
</reference>
<proteinExistence type="inferred from homology"/>
<gene>
    <name evidence="1" type="primary">atpF</name>
    <name type="ordered locus">PHZ_c0587</name>
</gene>